<feature type="chain" id="PRO_1000013286" description="Large ribosomal subunit protein bL34">
    <location>
        <begin position="1"/>
        <end position="50"/>
    </location>
</feature>
<protein>
    <recommendedName>
        <fullName evidence="1">Large ribosomal subunit protein bL34</fullName>
    </recommendedName>
    <alternativeName>
        <fullName evidence="2">50S ribosomal protein L34</fullName>
    </alternativeName>
</protein>
<name>RL34_BLOPB</name>
<organism>
    <name type="scientific">Blochmanniella pennsylvanica (strain BPEN)</name>
    <dbReference type="NCBI Taxonomy" id="291272"/>
    <lineage>
        <taxon>Bacteria</taxon>
        <taxon>Pseudomonadati</taxon>
        <taxon>Pseudomonadota</taxon>
        <taxon>Gammaproteobacteria</taxon>
        <taxon>Enterobacterales</taxon>
        <taxon>Enterobacteriaceae</taxon>
        <taxon>ant endosymbionts</taxon>
        <taxon>Candidatus Blochmanniella</taxon>
    </lineage>
</organism>
<proteinExistence type="inferred from homology"/>
<keyword id="KW-1185">Reference proteome</keyword>
<keyword id="KW-0687">Ribonucleoprotein</keyword>
<keyword id="KW-0689">Ribosomal protein</keyword>
<dbReference type="EMBL" id="CP000016">
    <property type="protein sequence ID" value="AAZ40664.1"/>
    <property type="molecule type" value="Genomic_DNA"/>
</dbReference>
<dbReference type="RefSeq" id="WP_011282570.1">
    <property type="nucleotide sequence ID" value="NC_007292.1"/>
</dbReference>
<dbReference type="SMR" id="Q494B7"/>
<dbReference type="STRING" id="291272.BPEN_014"/>
<dbReference type="KEGG" id="bpn:BPEN_014"/>
<dbReference type="eggNOG" id="COG0230">
    <property type="taxonomic scope" value="Bacteria"/>
</dbReference>
<dbReference type="HOGENOM" id="CLU_129938_2_1_6"/>
<dbReference type="OrthoDB" id="9804164at2"/>
<dbReference type="Proteomes" id="UP000007794">
    <property type="component" value="Chromosome"/>
</dbReference>
<dbReference type="GO" id="GO:1990904">
    <property type="term" value="C:ribonucleoprotein complex"/>
    <property type="evidence" value="ECO:0007669"/>
    <property type="project" value="UniProtKB-KW"/>
</dbReference>
<dbReference type="GO" id="GO:0005840">
    <property type="term" value="C:ribosome"/>
    <property type="evidence" value="ECO:0007669"/>
    <property type="project" value="UniProtKB-KW"/>
</dbReference>
<dbReference type="GO" id="GO:0003735">
    <property type="term" value="F:structural constituent of ribosome"/>
    <property type="evidence" value="ECO:0007669"/>
    <property type="project" value="InterPro"/>
</dbReference>
<dbReference type="GO" id="GO:0006412">
    <property type="term" value="P:translation"/>
    <property type="evidence" value="ECO:0007669"/>
    <property type="project" value="UniProtKB-UniRule"/>
</dbReference>
<dbReference type="FunFam" id="1.10.287.3980:FF:000001">
    <property type="entry name" value="Mitochondrial ribosomal protein L34"/>
    <property type="match status" value="1"/>
</dbReference>
<dbReference type="Gene3D" id="1.10.287.3980">
    <property type="match status" value="1"/>
</dbReference>
<dbReference type="HAMAP" id="MF_00391">
    <property type="entry name" value="Ribosomal_bL34"/>
    <property type="match status" value="1"/>
</dbReference>
<dbReference type="InterPro" id="IPR000271">
    <property type="entry name" value="Ribosomal_bL34"/>
</dbReference>
<dbReference type="InterPro" id="IPR020939">
    <property type="entry name" value="Ribosomal_bL34_CS"/>
</dbReference>
<dbReference type="NCBIfam" id="TIGR01030">
    <property type="entry name" value="rpmH_bact"/>
    <property type="match status" value="1"/>
</dbReference>
<dbReference type="PANTHER" id="PTHR14503:SF4">
    <property type="entry name" value="LARGE RIBOSOMAL SUBUNIT PROTEIN BL34M"/>
    <property type="match status" value="1"/>
</dbReference>
<dbReference type="PANTHER" id="PTHR14503">
    <property type="entry name" value="MITOCHONDRIAL RIBOSOMAL PROTEIN 34 FAMILY MEMBER"/>
    <property type="match status" value="1"/>
</dbReference>
<dbReference type="Pfam" id="PF00468">
    <property type="entry name" value="Ribosomal_L34"/>
    <property type="match status" value="1"/>
</dbReference>
<dbReference type="PROSITE" id="PS00784">
    <property type="entry name" value="RIBOSOMAL_L34"/>
    <property type="match status" value="1"/>
</dbReference>
<gene>
    <name evidence="1" type="primary">rpmH</name>
    <name type="ordered locus">BPEN_014</name>
</gene>
<evidence type="ECO:0000255" key="1">
    <source>
        <dbReference type="HAMAP-Rule" id="MF_00391"/>
    </source>
</evidence>
<evidence type="ECO:0000305" key="2"/>
<comment type="similarity">
    <text evidence="1">Belongs to the bacterial ribosomal protein bL34 family.</text>
</comment>
<sequence length="50" mass="6070">MKRTFQPSILKRNRTHGFRVRMSRRQGRKILSRRRSKGRVRLVVSVLNIH</sequence>
<accession>Q494B7</accession>
<reference key="1">
    <citation type="journal article" date="2005" name="Genome Res.">
        <title>Genome sequence of Blochmannia pennsylvanicus indicates parallel evolutionary trends among bacterial mutualists of insects.</title>
        <authorList>
            <person name="Degnan P.H."/>
            <person name="Lazarus A.B."/>
            <person name="Wernegreen J.J."/>
        </authorList>
    </citation>
    <scope>NUCLEOTIDE SEQUENCE [LARGE SCALE GENOMIC DNA]</scope>
    <source>
        <strain>BPEN</strain>
    </source>
</reference>